<proteinExistence type="evidence at protein level"/>
<evidence type="ECO:0000255" key="1"/>
<evidence type="ECO:0000269" key="2">
    <source>
    </source>
</evidence>
<evidence type="ECO:0000269" key="3">
    <source>
    </source>
</evidence>
<evidence type="ECO:0000269" key="4">
    <source>
    </source>
</evidence>
<evidence type="ECO:0000269" key="5">
    <source>
    </source>
</evidence>
<evidence type="ECO:0000269" key="6">
    <source>
    </source>
</evidence>
<evidence type="ECO:0000305" key="7"/>
<comment type="function">
    <text evidence="2 5 6">Ethanolamine phosphate transferase involved in glycosylphosphatidylinositol-anchor biosynthesis. Transfers ethanolamine phosphate to the GPI second mannose. Although not essential, addition of ethanolamine phosphate to the second mannose plays an important role in cell separation via the GPI-based modification of daughter-specific proteins.</text>
</comment>
<comment type="pathway">
    <text>Glycolipid biosynthesis; glycosylphosphatidylinositol-anchor biosynthesis.</text>
</comment>
<comment type="subcellular location">
    <subcellularLocation>
        <location evidence="2 3">Endoplasmic reticulum membrane</location>
        <topology evidence="2 3">Multi-pass membrane protein</topology>
    </subcellularLocation>
</comment>
<comment type="PTM">
    <text evidence="2">N-glycosylated.</text>
</comment>
<comment type="miscellaneous">
    <text evidence="4">Present with 259 molecules/cell in log phase SD medium.</text>
</comment>
<comment type="similarity">
    <text evidence="7">Belongs to the PIGG/PIGN/PIGO family. PIGG subfamily.</text>
</comment>
<keyword id="KW-0256">Endoplasmic reticulum</keyword>
<keyword id="KW-0325">Glycoprotein</keyword>
<keyword id="KW-0337">GPI-anchor biosynthesis</keyword>
<keyword id="KW-0472">Membrane</keyword>
<keyword id="KW-1185">Reference proteome</keyword>
<keyword id="KW-0732">Signal</keyword>
<keyword id="KW-0808">Transferase</keyword>
<keyword id="KW-0812">Transmembrane</keyword>
<keyword id="KW-1133">Transmembrane helix</keyword>
<protein>
    <recommendedName>
        <fullName>GPI ethanolamine phosphate transferase 2</fullName>
        <ecNumber>2.-.-.-</ecNumber>
    </recommendedName>
    <alternativeName>
        <fullName>Glycosylphosphatidylinositol-anchor biosynthesis protein 7</fullName>
    </alternativeName>
    <alternativeName>
        <fullName>Local anestheticum-sensitive protein 21</fullName>
    </alternativeName>
</protein>
<reference key="1">
    <citation type="journal article" date="1995" name="Yeast">
        <title>Sequence of a 17.1 kb DNA fragment from chromosome X of Saccharomyces cerevisiae includes the mitochondrial ribosomal protein L8.</title>
        <authorList>
            <person name="Vandenbol M."/>
            <person name="Durand P."/>
            <person name="Dion C."/>
            <person name="Portetelle D."/>
            <person name="Hilger F."/>
        </authorList>
    </citation>
    <scope>NUCLEOTIDE SEQUENCE [GENOMIC DNA]</scope>
    <source>
        <strain>ATCC 204508 / S288c</strain>
    </source>
</reference>
<reference key="2">
    <citation type="journal article" date="1996" name="EMBO J.">
        <title>Complete nucleotide sequence of Saccharomyces cerevisiae chromosome X.</title>
        <authorList>
            <person name="Galibert F."/>
            <person name="Alexandraki D."/>
            <person name="Baur A."/>
            <person name="Boles E."/>
            <person name="Chalwatzis N."/>
            <person name="Chuat J.-C."/>
            <person name="Coster F."/>
            <person name="Cziepluch C."/>
            <person name="de Haan M."/>
            <person name="Domdey H."/>
            <person name="Durand P."/>
            <person name="Entian K.-D."/>
            <person name="Gatius M."/>
            <person name="Goffeau A."/>
            <person name="Grivell L.A."/>
            <person name="Hennemann A."/>
            <person name="Herbert C.J."/>
            <person name="Heumann K."/>
            <person name="Hilger F."/>
            <person name="Hollenberg C.P."/>
            <person name="Huang M.-E."/>
            <person name="Jacq C."/>
            <person name="Jauniaux J.-C."/>
            <person name="Katsoulou C."/>
            <person name="Kirchrath L."/>
            <person name="Kleine K."/>
            <person name="Kordes E."/>
            <person name="Koetter P."/>
            <person name="Liebl S."/>
            <person name="Louis E.J."/>
            <person name="Manus V."/>
            <person name="Mewes H.-W."/>
            <person name="Miosga T."/>
            <person name="Obermaier B."/>
            <person name="Perea J."/>
            <person name="Pohl T.M."/>
            <person name="Portetelle D."/>
            <person name="Pujol A."/>
            <person name="Purnelle B."/>
            <person name="Ramezani Rad M."/>
            <person name="Rasmussen S.W."/>
            <person name="Rose M."/>
            <person name="Rossau R."/>
            <person name="Schaaff-Gerstenschlaeger I."/>
            <person name="Smits P.H.M."/>
            <person name="Scarcez T."/>
            <person name="Soriano N."/>
            <person name="To Van D."/>
            <person name="Tzermia M."/>
            <person name="Van Broekhoven A."/>
            <person name="Vandenbol M."/>
            <person name="Wedler H."/>
            <person name="von Wettstein D."/>
            <person name="Wambutt R."/>
            <person name="Zagulski M."/>
            <person name="Zollner A."/>
            <person name="Karpfinger-Hartl L."/>
        </authorList>
    </citation>
    <scope>NUCLEOTIDE SEQUENCE [LARGE SCALE GENOMIC DNA]</scope>
    <source>
        <strain>ATCC 204508 / S288c</strain>
    </source>
</reference>
<reference key="3">
    <citation type="journal article" date="2014" name="G3 (Bethesda)">
        <title>The reference genome sequence of Saccharomyces cerevisiae: Then and now.</title>
        <authorList>
            <person name="Engel S.R."/>
            <person name="Dietrich F.S."/>
            <person name="Fisk D.G."/>
            <person name="Binkley G."/>
            <person name="Balakrishnan R."/>
            <person name="Costanzo M.C."/>
            <person name="Dwight S.S."/>
            <person name="Hitz B.C."/>
            <person name="Karra K."/>
            <person name="Nash R.S."/>
            <person name="Weng S."/>
            <person name="Wong E.D."/>
            <person name="Lloyd P."/>
            <person name="Skrzypek M.S."/>
            <person name="Miyasato S.R."/>
            <person name="Simison M."/>
            <person name="Cherry J.M."/>
        </authorList>
    </citation>
    <scope>GENOME REANNOTATION</scope>
    <source>
        <strain>ATCC 204508 / S288c</strain>
    </source>
</reference>
<reference key="4">
    <citation type="journal article" date="1999" name="Genes Genet. Syst.">
        <title>Las21 participates in extracellular/cell surface phenomena in Saccharomyces cerevisiae.</title>
        <authorList>
            <person name="Toh-e A."/>
            <person name="Oguchi T."/>
        </authorList>
    </citation>
    <scope>PRELIMINARY FUNCTION</scope>
</reference>
<reference key="5">
    <citation type="journal article" date="1999" name="J. Biol. Chem.">
        <title>Deletion of GPI7, a yeast gene required for addition of a side chain to the glycosylphosphatidylinositol (GPI) core structure, affects GPI protein transport, remodeling, and cell wall integrity.</title>
        <authorList>
            <person name="Benachour A."/>
            <person name="Sipos G."/>
            <person name="Flury I."/>
            <person name="Reggiori F."/>
            <person name="Canivenc-Gansel E."/>
            <person name="Vionnet C."/>
            <person name="Conzelmann A."/>
            <person name="Benghezal M."/>
        </authorList>
    </citation>
    <scope>FUNCTION</scope>
    <scope>SUBCELLULAR LOCATION</scope>
    <scope>GLYCOSYLATION</scope>
</reference>
<reference key="6">
    <citation type="journal article" date="2003" name="Nature">
        <title>Global analysis of protein expression in yeast.</title>
        <authorList>
            <person name="Ghaemmaghami S."/>
            <person name="Huh W.-K."/>
            <person name="Bower K."/>
            <person name="Howson R.W."/>
            <person name="Belle A."/>
            <person name="Dephoure N."/>
            <person name="O'Shea E.K."/>
            <person name="Weissman J.S."/>
        </authorList>
    </citation>
    <scope>LEVEL OF PROTEIN EXPRESSION [LARGE SCALE ANALYSIS]</scope>
</reference>
<reference key="7">
    <citation type="journal article" date="2003" name="Nature">
        <title>Global analysis of protein localization in budding yeast.</title>
        <authorList>
            <person name="Huh W.-K."/>
            <person name="Falvo J.V."/>
            <person name="Gerke L.C."/>
            <person name="Carroll A.S."/>
            <person name="Howson R.W."/>
            <person name="Weissman J.S."/>
            <person name="O'Shea E.K."/>
        </authorList>
    </citation>
    <scope>SUBCELLULAR LOCATION [LARGE SCALE ANALYSIS]</scope>
</reference>
<reference key="8">
    <citation type="journal article" date="2004" name="J. Biol. Chem.">
        <title>Glycosylphosphatidylinositol (GPI) proteins of Saccharomyces cerevisiae contain ethanolamine phosphate groups on the alpha1,4-linked mannose of the GPI anchor.</title>
        <authorList>
            <person name="Imhof I."/>
            <person name="Flury I."/>
            <person name="Vionnet C."/>
            <person name="Roubaty C."/>
            <person name="Egger D."/>
            <person name="Conzelmann A."/>
        </authorList>
    </citation>
    <scope>FUNCTION</scope>
</reference>
<reference key="9">
    <citation type="journal article" date="2004" name="J. Biol. Chem.">
        <title>GPI7 involved in glycosylphosphatidylinositol biosynthesis is essential for yeast cell separation.</title>
        <authorList>
            <person name="Fujita M."/>
            <person name="Yoko-o T."/>
            <person name="Okamoto M."/>
            <person name="Jigami Y."/>
        </authorList>
    </citation>
    <scope>FUNCTION</scope>
    <scope>MUTAGENESIS OF 153-ASP-ASP-154</scope>
</reference>
<reference key="10">
    <citation type="journal article" date="2006" name="Proc. Natl. Acad. Sci. U.S.A.">
        <title>A global topology map of the Saccharomyces cerevisiae membrane proteome.</title>
        <authorList>
            <person name="Kim H."/>
            <person name="Melen K."/>
            <person name="Oesterberg M."/>
            <person name="von Heijne G."/>
        </authorList>
    </citation>
    <scope>TOPOLOGY [LARGE SCALE ANALYSIS]</scope>
    <source>
        <strain>ATCC 208353 / W303-1A</strain>
    </source>
</reference>
<organism>
    <name type="scientific">Saccharomyces cerevisiae (strain ATCC 204508 / S288c)</name>
    <name type="common">Baker's yeast</name>
    <dbReference type="NCBI Taxonomy" id="559292"/>
    <lineage>
        <taxon>Eukaryota</taxon>
        <taxon>Fungi</taxon>
        <taxon>Dikarya</taxon>
        <taxon>Ascomycota</taxon>
        <taxon>Saccharomycotina</taxon>
        <taxon>Saccharomycetes</taxon>
        <taxon>Saccharomycetales</taxon>
        <taxon>Saccharomycetaceae</taxon>
        <taxon>Saccharomyces</taxon>
    </lineage>
</organism>
<name>GPI7_YEAST</name>
<gene>
    <name type="primary">LAS21</name>
    <name type="synonym">GPI7</name>
    <name type="ordered locus">YJL062W</name>
    <name type="ORF">HRC830</name>
    <name type="ORF">J1132</name>
</gene>
<dbReference type="EC" id="2.-.-.-"/>
<dbReference type="EMBL" id="Z34288">
    <property type="protein sequence ID" value="CAA84061.1"/>
    <property type="molecule type" value="Genomic_DNA"/>
</dbReference>
<dbReference type="EMBL" id="Z49337">
    <property type="protein sequence ID" value="CAA89353.1"/>
    <property type="molecule type" value="Genomic_DNA"/>
</dbReference>
<dbReference type="EMBL" id="BK006943">
    <property type="protein sequence ID" value="DAA08736.1"/>
    <property type="molecule type" value="Genomic_DNA"/>
</dbReference>
<dbReference type="PIR" id="S50810">
    <property type="entry name" value="S50810"/>
</dbReference>
<dbReference type="RefSeq" id="NP_012473.1">
    <property type="nucleotide sequence ID" value="NM_001181495.1"/>
</dbReference>
<dbReference type="SMR" id="P40367"/>
<dbReference type="BioGRID" id="33692">
    <property type="interactions" value="391"/>
</dbReference>
<dbReference type="ComplexPortal" id="CPX-2678">
    <property type="entry name" value="Glycosylphosphatidylinsitol ethanolamine-phosphate transferase II complex"/>
</dbReference>
<dbReference type="DIP" id="DIP-7713N"/>
<dbReference type="FunCoup" id="P40367">
    <property type="interactions" value="579"/>
</dbReference>
<dbReference type="IntAct" id="P40367">
    <property type="interactions" value="6"/>
</dbReference>
<dbReference type="MINT" id="P40367"/>
<dbReference type="STRING" id="4932.YJL062W"/>
<dbReference type="GlyCosmos" id="P40367">
    <property type="glycosylation" value="4 sites, No reported glycans"/>
</dbReference>
<dbReference type="GlyGen" id="P40367">
    <property type="glycosylation" value="4 sites"/>
</dbReference>
<dbReference type="PaxDb" id="4932-YJL062W"/>
<dbReference type="PeptideAtlas" id="P40367"/>
<dbReference type="EnsemblFungi" id="YJL062W_mRNA">
    <property type="protein sequence ID" value="YJL062W"/>
    <property type="gene ID" value="YJL062W"/>
</dbReference>
<dbReference type="GeneID" id="853384"/>
<dbReference type="KEGG" id="sce:YJL062W"/>
<dbReference type="AGR" id="SGD:S000003598"/>
<dbReference type="SGD" id="S000003598">
    <property type="gene designation" value="LAS21"/>
</dbReference>
<dbReference type="VEuPathDB" id="FungiDB:YJL062W"/>
<dbReference type="eggNOG" id="KOG2125">
    <property type="taxonomic scope" value="Eukaryota"/>
</dbReference>
<dbReference type="GeneTree" id="ENSGT00910000144269"/>
<dbReference type="HOGENOM" id="CLU_004770_0_0_1"/>
<dbReference type="InParanoid" id="P40367"/>
<dbReference type="OMA" id="SWNQTGQ"/>
<dbReference type="OrthoDB" id="272139at2759"/>
<dbReference type="BioCyc" id="YEAST:G3O-31524-MONOMER"/>
<dbReference type="Reactome" id="R-SCE-162710">
    <property type="pathway name" value="Synthesis of glycosylphosphatidylinositol (GPI)"/>
</dbReference>
<dbReference type="UniPathway" id="UPA00196"/>
<dbReference type="BioGRID-ORCS" id="853384">
    <property type="hits" value="7 hits in 10 CRISPR screens"/>
</dbReference>
<dbReference type="PRO" id="PR:P40367"/>
<dbReference type="Proteomes" id="UP000002311">
    <property type="component" value="Chromosome X"/>
</dbReference>
<dbReference type="RNAct" id="P40367">
    <property type="molecule type" value="protein"/>
</dbReference>
<dbReference type="GO" id="GO:0005783">
    <property type="term" value="C:endoplasmic reticulum"/>
    <property type="evidence" value="ECO:0007005"/>
    <property type="project" value="SGD"/>
</dbReference>
<dbReference type="GO" id="GO:0005789">
    <property type="term" value="C:endoplasmic reticulum membrane"/>
    <property type="evidence" value="ECO:0000314"/>
    <property type="project" value="SGD"/>
</dbReference>
<dbReference type="GO" id="GO:0005886">
    <property type="term" value="C:plasma membrane"/>
    <property type="evidence" value="ECO:0000314"/>
    <property type="project" value="SGD"/>
</dbReference>
<dbReference type="GO" id="GO:0051267">
    <property type="term" value="F:CP2 mannose-ethanolamine phosphotransferase activity"/>
    <property type="evidence" value="ECO:0000315"/>
    <property type="project" value="SGD"/>
</dbReference>
<dbReference type="GO" id="GO:0006506">
    <property type="term" value="P:GPI anchor biosynthetic process"/>
    <property type="evidence" value="ECO:0000315"/>
    <property type="project" value="SGD"/>
</dbReference>
<dbReference type="CDD" id="cd16024">
    <property type="entry name" value="GPI_EPT_2"/>
    <property type="match status" value="1"/>
</dbReference>
<dbReference type="FunFam" id="3.40.720.10:FF:000045">
    <property type="entry name" value="GPI ethanolamine phosphate transferase 2"/>
    <property type="match status" value="1"/>
</dbReference>
<dbReference type="Gene3D" id="3.40.720.10">
    <property type="entry name" value="Alkaline Phosphatase, subunit A"/>
    <property type="match status" value="1"/>
</dbReference>
<dbReference type="InterPro" id="IPR017850">
    <property type="entry name" value="Alkaline_phosphatase_core_sf"/>
</dbReference>
<dbReference type="InterPro" id="IPR002591">
    <property type="entry name" value="Phosphodiest/P_Trfase"/>
</dbReference>
<dbReference type="InterPro" id="IPR037674">
    <property type="entry name" value="PIG-G_N"/>
</dbReference>
<dbReference type="InterPro" id="IPR039527">
    <property type="entry name" value="PIGG/GPI7"/>
</dbReference>
<dbReference type="InterPro" id="IPR045687">
    <property type="entry name" value="PIGG/GPI7_C"/>
</dbReference>
<dbReference type="PANTHER" id="PTHR23072:SF0">
    <property type="entry name" value="GPI ETHANOLAMINE PHOSPHATE TRANSFERASE 2"/>
    <property type="match status" value="1"/>
</dbReference>
<dbReference type="PANTHER" id="PTHR23072">
    <property type="entry name" value="PHOSPHATIDYLINOSITOL GLYCAN-RELATED"/>
    <property type="match status" value="1"/>
</dbReference>
<dbReference type="Pfam" id="PF01663">
    <property type="entry name" value="Phosphodiest"/>
    <property type="match status" value="1"/>
</dbReference>
<dbReference type="Pfam" id="PF19316">
    <property type="entry name" value="PIGO_PIGG"/>
    <property type="match status" value="1"/>
</dbReference>
<dbReference type="SUPFAM" id="SSF53649">
    <property type="entry name" value="Alkaline phosphatase-like"/>
    <property type="match status" value="1"/>
</dbReference>
<accession>P40367</accession>
<accession>D6VWC0</accession>
<feature type="signal peptide" evidence="1">
    <location>
        <begin position="1"/>
        <end position="32"/>
    </location>
</feature>
<feature type="chain" id="PRO_0000203059" description="GPI ethanolamine phosphate transferase 2">
    <location>
        <begin position="33"/>
        <end position="830"/>
    </location>
</feature>
<feature type="topological domain" description="Lumenal" evidence="1">
    <location>
        <begin position="33"/>
        <end position="321"/>
    </location>
</feature>
<feature type="transmembrane region" description="Helical" evidence="1">
    <location>
        <begin position="322"/>
        <end position="342"/>
    </location>
</feature>
<feature type="topological domain" description="Cytoplasmic" evidence="1">
    <location>
        <begin position="343"/>
        <end position="405"/>
    </location>
</feature>
<feature type="transmembrane region" description="Helical" evidence="1">
    <location>
        <begin position="406"/>
        <end position="426"/>
    </location>
</feature>
<feature type="topological domain" description="Lumenal" evidence="1">
    <location>
        <begin position="427"/>
        <end position="439"/>
    </location>
</feature>
<feature type="transmembrane region" description="Helical" evidence="1">
    <location>
        <begin position="440"/>
        <end position="460"/>
    </location>
</feature>
<feature type="topological domain" description="Cytoplasmic" evidence="1">
    <location>
        <begin position="461"/>
        <end position="469"/>
    </location>
</feature>
<feature type="transmembrane region" description="Helical" evidence="1">
    <location>
        <begin position="470"/>
        <end position="490"/>
    </location>
</feature>
<feature type="topological domain" description="Lumenal" evidence="1">
    <location>
        <begin position="491"/>
        <end position="533"/>
    </location>
</feature>
<feature type="transmembrane region" description="Helical" evidence="1">
    <location>
        <begin position="534"/>
        <end position="554"/>
    </location>
</feature>
<feature type="topological domain" description="Cytoplasmic" evidence="1">
    <location>
        <begin position="555"/>
        <end position="598"/>
    </location>
</feature>
<feature type="transmembrane region" description="Helical" evidence="1">
    <location>
        <begin position="599"/>
        <end position="619"/>
    </location>
</feature>
<feature type="topological domain" description="Lumenal" evidence="1">
    <location>
        <begin position="620"/>
        <end position="651"/>
    </location>
</feature>
<feature type="transmembrane region" description="Helical" evidence="1">
    <location>
        <begin position="652"/>
        <end position="672"/>
    </location>
</feature>
<feature type="topological domain" description="Cytoplasmic" evidence="1">
    <location>
        <begin position="673"/>
        <end position="682"/>
    </location>
</feature>
<feature type="transmembrane region" description="Helical" evidence="1">
    <location>
        <begin position="683"/>
        <end position="703"/>
    </location>
</feature>
<feature type="topological domain" description="Lumenal" evidence="1">
    <location>
        <begin position="704"/>
        <end position="724"/>
    </location>
</feature>
<feature type="transmembrane region" description="Helical" evidence="1">
    <location>
        <begin position="725"/>
        <end position="745"/>
    </location>
</feature>
<feature type="topological domain" description="Cytoplasmic" evidence="1">
    <location>
        <begin position="746"/>
        <end position="768"/>
    </location>
</feature>
<feature type="transmembrane region" description="Helical" evidence="1">
    <location>
        <begin position="769"/>
        <end position="789"/>
    </location>
</feature>
<feature type="topological domain" description="Lumenal" evidence="1">
    <location>
        <begin position="790"/>
        <end position="805"/>
    </location>
</feature>
<feature type="transmembrane region" description="Helical" evidence="1">
    <location>
        <begin position="806"/>
        <end position="826"/>
    </location>
</feature>
<feature type="topological domain" description="Cytoplasmic" evidence="1">
    <location>
        <begin position="827"/>
        <end position="830"/>
    </location>
</feature>
<feature type="glycosylation site" description="N-linked (GlcNAc...) asparagine" evidence="1">
    <location>
        <position position="145"/>
    </location>
</feature>
<feature type="glycosylation site" description="N-linked (GlcNAc...) asparagine" evidence="1">
    <location>
        <position position="185"/>
    </location>
</feature>
<feature type="glycosylation site" description="N-linked (GlcNAc...) asparagine" evidence="1">
    <location>
        <position position="298"/>
    </location>
</feature>
<feature type="glycosylation site" description="N-linked (GlcNAc...) asparagine" evidence="1">
    <location>
        <position position="506"/>
    </location>
</feature>
<feature type="mutagenesis site" description="In GPI7-2; temperature-sensitive mutant that shows defects in cell separation and a daughter cell-specific growth defect." evidence="6">
    <original>DD</original>
    <variation>AA</variation>
    <location>
        <begin position="153"/>
        <end position="154"/>
    </location>
</feature>
<sequence>MNLKQFTCLSCAQLLAILLFIFAFFPRKIVLTGISKQDPDQDRDLQRDRPFQKLVFVIIDALRSDFLFDSQISHFNNVHQWLNTGEAWGYTSFANPPTVTLPRLKSITTGSTPSFIDLLLNVAQDIDSNDLSEHDSWLQQFIQHNNTIRFMGDDTWLKLFPQQWFDFADPTHSFFVSDFTQVDNNVTRNLPGKLFQEWAQWDVAILHYLGLDHIGHKDGPHSKFMAAKHQEMDSILKSIYDEVLEHEDDDDTLICVLGDHGMNELGNHGGSSAGETSAGLLFLSPKLAQFARPESQVNYTLPINASPDWNFQYLETVQQIDIVPTIAALFGMPIPMNSVGIIIPDFLQLLPNKLASMKENFMHLWKLSDHHGEVALDDFTAEDIYTKMYTIQETLTKSATNYNYPLLTLAFVGFLIITIIAIYVLLRYSGPDFWQLRVSSLSVLLVSIILGVSTFASSFIEEEHQLWWWIVTAFSAVPLFVYRLNVLIIVRWFIMMACVRSIKFWNNSGQKFIYSNVMSNLLNQNPSWKWCLNMLTFLVLIMASAGFQVLHFIVTTILVGLCFTYKISWEIVNGNQAEIPLFMHDLLAKIDFAPTESNLIVLARVFFQAWAIVVISRLVLTKLKVLNKNYLIKDMKVYITILLMFQTSSQNIGQFLVFQILESQIFYFFQNIPTASLTSTSKIYFSNLVSLILQNFTFFQFGGTNSISTIDLGNAYHGVSSDYNIYVVGILMSVANFAPAIYWSMLPWSINYASIPAQVKLQTFIRSKLPAFTYHCIFGTCLMTACVVLRFHLFIWSVFSPKLCYFLGWNFVMGLLNGWLPELALLCALD</sequence>